<protein>
    <recommendedName>
        <fullName evidence="1">tRNA modification GTPase MnmE</fullName>
        <ecNumber evidence="1">3.6.-.-</ecNumber>
    </recommendedName>
</protein>
<comment type="function">
    <text evidence="1">Exhibits a very high intrinsic GTPase hydrolysis rate. Involved in the addition of a carboxymethylaminomethyl (cmnm) group at the wobble position (U34) of certain tRNAs, forming tRNA-cmnm(5)s(2)U34.</text>
</comment>
<comment type="cofactor">
    <cofactor evidence="1">
        <name>K(+)</name>
        <dbReference type="ChEBI" id="CHEBI:29103"/>
    </cofactor>
    <text evidence="1">Binds 1 potassium ion per subunit.</text>
</comment>
<comment type="subunit">
    <text evidence="1">Homodimer. Heterotetramer of two MnmE and two MnmG subunits.</text>
</comment>
<comment type="subcellular location">
    <subcellularLocation>
        <location evidence="1">Cytoplasm</location>
    </subcellularLocation>
</comment>
<comment type="similarity">
    <text evidence="1">Belongs to the TRAFAC class TrmE-Era-EngA-EngB-Septin-like GTPase superfamily. TrmE GTPase family.</text>
</comment>
<proteinExistence type="inferred from homology"/>
<name>MNME_BUCCC</name>
<keyword id="KW-0963">Cytoplasm</keyword>
<keyword id="KW-0342">GTP-binding</keyword>
<keyword id="KW-0378">Hydrolase</keyword>
<keyword id="KW-0460">Magnesium</keyword>
<keyword id="KW-0479">Metal-binding</keyword>
<keyword id="KW-0547">Nucleotide-binding</keyword>
<keyword id="KW-0630">Potassium</keyword>
<keyword id="KW-1185">Reference proteome</keyword>
<keyword id="KW-0819">tRNA processing</keyword>
<gene>
    <name evidence="1" type="primary">mnmE</name>
    <name evidence="1" type="synonym">trmE</name>
    <name type="ordered locus">BCc_008</name>
</gene>
<feature type="chain" id="PRO_0000345734" description="tRNA modification GTPase MnmE">
    <location>
        <begin position="1"/>
        <end position="454"/>
    </location>
</feature>
<feature type="domain" description="TrmE-type G">
    <location>
        <begin position="216"/>
        <end position="377"/>
    </location>
</feature>
<feature type="binding site" evidence="1">
    <location>
        <position position="23"/>
    </location>
    <ligand>
        <name>(6S)-5-formyl-5,6,7,8-tetrahydrofolate</name>
        <dbReference type="ChEBI" id="CHEBI:57457"/>
    </ligand>
</feature>
<feature type="binding site" evidence="1">
    <location>
        <position position="80"/>
    </location>
    <ligand>
        <name>(6S)-5-formyl-5,6,7,8-tetrahydrofolate</name>
        <dbReference type="ChEBI" id="CHEBI:57457"/>
    </ligand>
</feature>
<feature type="binding site" evidence="1">
    <location>
        <position position="120"/>
    </location>
    <ligand>
        <name>(6S)-5-formyl-5,6,7,8-tetrahydrofolate</name>
        <dbReference type="ChEBI" id="CHEBI:57457"/>
    </ligand>
</feature>
<feature type="binding site" evidence="1">
    <location>
        <begin position="226"/>
        <end position="231"/>
    </location>
    <ligand>
        <name>GTP</name>
        <dbReference type="ChEBI" id="CHEBI:37565"/>
    </ligand>
</feature>
<feature type="binding site" evidence="1">
    <location>
        <position position="226"/>
    </location>
    <ligand>
        <name>K(+)</name>
        <dbReference type="ChEBI" id="CHEBI:29103"/>
    </ligand>
</feature>
<feature type="binding site" evidence="1">
    <location>
        <position position="230"/>
    </location>
    <ligand>
        <name>Mg(2+)</name>
        <dbReference type="ChEBI" id="CHEBI:18420"/>
    </ligand>
</feature>
<feature type="binding site" evidence="1">
    <location>
        <begin position="245"/>
        <end position="251"/>
    </location>
    <ligand>
        <name>GTP</name>
        <dbReference type="ChEBI" id="CHEBI:37565"/>
    </ligand>
</feature>
<feature type="binding site" evidence="1">
    <location>
        <position position="245"/>
    </location>
    <ligand>
        <name>K(+)</name>
        <dbReference type="ChEBI" id="CHEBI:29103"/>
    </ligand>
</feature>
<feature type="binding site" evidence="1">
    <location>
        <position position="247"/>
    </location>
    <ligand>
        <name>K(+)</name>
        <dbReference type="ChEBI" id="CHEBI:29103"/>
    </ligand>
</feature>
<feature type="binding site" evidence="1">
    <location>
        <position position="250"/>
    </location>
    <ligand>
        <name>K(+)</name>
        <dbReference type="ChEBI" id="CHEBI:29103"/>
    </ligand>
</feature>
<feature type="binding site" evidence="1">
    <location>
        <position position="251"/>
    </location>
    <ligand>
        <name>Mg(2+)</name>
        <dbReference type="ChEBI" id="CHEBI:18420"/>
    </ligand>
</feature>
<feature type="binding site" evidence="1">
    <location>
        <begin position="270"/>
        <end position="273"/>
    </location>
    <ligand>
        <name>GTP</name>
        <dbReference type="ChEBI" id="CHEBI:37565"/>
    </ligand>
</feature>
<feature type="binding site" evidence="1">
    <location>
        <position position="454"/>
    </location>
    <ligand>
        <name>(6S)-5-formyl-5,6,7,8-tetrahydrofolate</name>
        <dbReference type="ChEBI" id="CHEBI:57457"/>
    </ligand>
</feature>
<organism>
    <name type="scientific">Buchnera aphidicola subsp. Cinara cedri (strain Cc)</name>
    <dbReference type="NCBI Taxonomy" id="372461"/>
    <lineage>
        <taxon>Bacteria</taxon>
        <taxon>Pseudomonadati</taxon>
        <taxon>Pseudomonadota</taxon>
        <taxon>Gammaproteobacteria</taxon>
        <taxon>Enterobacterales</taxon>
        <taxon>Erwiniaceae</taxon>
        <taxon>Buchnera</taxon>
    </lineage>
</organism>
<evidence type="ECO:0000255" key="1">
    <source>
        <dbReference type="HAMAP-Rule" id="MF_00379"/>
    </source>
</evidence>
<dbReference type="EC" id="3.6.-.-" evidence="1"/>
<dbReference type="EMBL" id="CP000263">
    <property type="protein sequence ID" value="ABJ90494.1"/>
    <property type="molecule type" value="Genomic_DNA"/>
</dbReference>
<dbReference type="RefSeq" id="WP_011672413.1">
    <property type="nucleotide sequence ID" value="NC_008513.1"/>
</dbReference>
<dbReference type="SMR" id="Q058F5"/>
<dbReference type="STRING" id="372461.BCc_008"/>
<dbReference type="KEGG" id="bcc:BCc_008"/>
<dbReference type="eggNOG" id="COG0486">
    <property type="taxonomic scope" value="Bacteria"/>
</dbReference>
<dbReference type="HOGENOM" id="CLU_019624_4_1_6"/>
<dbReference type="OrthoDB" id="9805918at2"/>
<dbReference type="Proteomes" id="UP000000669">
    <property type="component" value="Chromosome"/>
</dbReference>
<dbReference type="GO" id="GO:0005829">
    <property type="term" value="C:cytosol"/>
    <property type="evidence" value="ECO:0007669"/>
    <property type="project" value="TreeGrafter"/>
</dbReference>
<dbReference type="GO" id="GO:0005525">
    <property type="term" value="F:GTP binding"/>
    <property type="evidence" value="ECO:0007669"/>
    <property type="project" value="UniProtKB-UniRule"/>
</dbReference>
<dbReference type="GO" id="GO:0003924">
    <property type="term" value="F:GTPase activity"/>
    <property type="evidence" value="ECO:0007669"/>
    <property type="project" value="UniProtKB-UniRule"/>
</dbReference>
<dbReference type="GO" id="GO:0046872">
    <property type="term" value="F:metal ion binding"/>
    <property type="evidence" value="ECO:0007669"/>
    <property type="project" value="UniProtKB-KW"/>
</dbReference>
<dbReference type="GO" id="GO:0030488">
    <property type="term" value="P:tRNA methylation"/>
    <property type="evidence" value="ECO:0007669"/>
    <property type="project" value="TreeGrafter"/>
</dbReference>
<dbReference type="GO" id="GO:0002098">
    <property type="term" value="P:tRNA wobble uridine modification"/>
    <property type="evidence" value="ECO:0007669"/>
    <property type="project" value="TreeGrafter"/>
</dbReference>
<dbReference type="CDD" id="cd04164">
    <property type="entry name" value="trmE"/>
    <property type="match status" value="1"/>
</dbReference>
<dbReference type="CDD" id="cd14858">
    <property type="entry name" value="TrmE_N"/>
    <property type="match status" value="1"/>
</dbReference>
<dbReference type="Gene3D" id="3.40.50.300">
    <property type="entry name" value="P-loop containing nucleotide triphosphate hydrolases"/>
    <property type="match status" value="1"/>
</dbReference>
<dbReference type="Gene3D" id="3.30.1360.120">
    <property type="entry name" value="Probable tRNA modification gtpase trme, domain 1"/>
    <property type="match status" value="1"/>
</dbReference>
<dbReference type="Gene3D" id="1.20.120.430">
    <property type="entry name" value="tRNA modification GTPase MnmE domain 2"/>
    <property type="match status" value="1"/>
</dbReference>
<dbReference type="HAMAP" id="MF_00379">
    <property type="entry name" value="GTPase_MnmE"/>
    <property type="match status" value="1"/>
</dbReference>
<dbReference type="InterPro" id="IPR031168">
    <property type="entry name" value="G_TrmE"/>
</dbReference>
<dbReference type="InterPro" id="IPR006073">
    <property type="entry name" value="GTP-bd"/>
</dbReference>
<dbReference type="InterPro" id="IPR018948">
    <property type="entry name" value="GTP-bd_TrmE_N"/>
</dbReference>
<dbReference type="InterPro" id="IPR004520">
    <property type="entry name" value="GTPase_MnmE"/>
</dbReference>
<dbReference type="InterPro" id="IPR027368">
    <property type="entry name" value="MnmE_dom2"/>
</dbReference>
<dbReference type="InterPro" id="IPR025867">
    <property type="entry name" value="MnmE_helical"/>
</dbReference>
<dbReference type="InterPro" id="IPR027417">
    <property type="entry name" value="P-loop_NTPase"/>
</dbReference>
<dbReference type="InterPro" id="IPR005225">
    <property type="entry name" value="Small_GTP-bd"/>
</dbReference>
<dbReference type="InterPro" id="IPR027266">
    <property type="entry name" value="TrmE/GcvT_dom1"/>
</dbReference>
<dbReference type="NCBIfam" id="TIGR00450">
    <property type="entry name" value="mnmE_trmE_thdF"/>
    <property type="match status" value="1"/>
</dbReference>
<dbReference type="NCBIfam" id="NF003661">
    <property type="entry name" value="PRK05291.1-3"/>
    <property type="match status" value="1"/>
</dbReference>
<dbReference type="NCBIfam" id="TIGR00231">
    <property type="entry name" value="small_GTP"/>
    <property type="match status" value="1"/>
</dbReference>
<dbReference type="PANTHER" id="PTHR42714">
    <property type="entry name" value="TRNA MODIFICATION GTPASE GTPBP3"/>
    <property type="match status" value="1"/>
</dbReference>
<dbReference type="PANTHER" id="PTHR42714:SF2">
    <property type="entry name" value="TRNA MODIFICATION GTPASE GTPBP3, MITOCHONDRIAL"/>
    <property type="match status" value="1"/>
</dbReference>
<dbReference type="Pfam" id="PF01926">
    <property type="entry name" value="MMR_HSR1"/>
    <property type="match status" value="1"/>
</dbReference>
<dbReference type="Pfam" id="PF12631">
    <property type="entry name" value="MnmE_helical"/>
    <property type="match status" value="1"/>
</dbReference>
<dbReference type="Pfam" id="PF10396">
    <property type="entry name" value="TrmE_N"/>
    <property type="match status" value="1"/>
</dbReference>
<dbReference type="SUPFAM" id="SSF52540">
    <property type="entry name" value="P-loop containing nucleoside triphosphate hydrolases"/>
    <property type="match status" value="1"/>
</dbReference>
<dbReference type="PROSITE" id="PS51709">
    <property type="entry name" value="G_TRME"/>
    <property type="match status" value="1"/>
</dbReference>
<reference key="1">
    <citation type="journal article" date="2006" name="Science">
        <title>A small microbial genome: the end of a long symbiotic relationship?</title>
        <authorList>
            <person name="Perez-Brocal V."/>
            <person name="Gil R."/>
            <person name="Ramos S."/>
            <person name="Lamelas A."/>
            <person name="Postigo M."/>
            <person name="Michelena J.M."/>
            <person name="Silva F.J."/>
            <person name="Moya A."/>
            <person name="Latorre A."/>
        </authorList>
    </citation>
    <scope>NUCLEOTIDE SEQUENCE [LARGE SCALE GENOMIC DNA]</scope>
    <source>
        <strain>Cc</strain>
    </source>
</reference>
<accession>Q058F5</accession>
<sequence length="454" mass="51976">MKFFDTIVSPATVIGRSGIGIIRISGISVLKIIKKFLKISMKERFAYFSSFYDVKNNLLDQGIALFFLAPKSFTGENILEFHSHGNPIILDLLIKNILTIKNVRIANPGEFSKRAFLNNKIDLVQAEAINDIINAESHLSVKAALSSLRGTFSKKINKILFNLKDIYSEIEAIINFPEELNDLNIQKNIKKKLSFIIKMITNLLDETHKNYIFSNTIKIVIAGPPNVGKSSLLNFLSKEKVSIVTNIPGTTRDVIHKNIWFNGVCCEFLDTAGLQKSQDIIEVIGIKLAKKHIKSCNHIFLMFDVTKKKMINNNFIKNIVNNLKKNQNITFIFNKIDLINKKPYISIIYKKFECIYLSLKKNIGIEYLKNKILEITTLHNNVESTFLAKKRHISALKKSLMYLINGKRNWMKNLYLELLSDDIRLSIKYLLKITGKFNSEDLLDKIFSKFCIGK</sequence>